<dbReference type="EC" id="4.1.99.17" evidence="1"/>
<dbReference type="EMBL" id="CP000230">
    <property type="protein sequence ID" value="ABC22808.1"/>
    <property type="molecule type" value="Genomic_DNA"/>
</dbReference>
<dbReference type="RefSeq" id="WP_011389761.1">
    <property type="nucleotide sequence ID" value="NC_007643.1"/>
</dbReference>
<dbReference type="RefSeq" id="YP_427095.1">
    <property type="nucleotide sequence ID" value="NC_007643.1"/>
</dbReference>
<dbReference type="SMR" id="Q2RST7"/>
<dbReference type="STRING" id="269796.Rru_A2008"/>
<dbReference type="EnsemblBacteria" id="ABC22808">
    <property type="protein sequence ID" value="ABC22808"/>
    <property type="gene ID" value="Rru_A2008"/>
</dbReference>
<dbReference type="KEGG" id="rru:Rru_A2008"/>
<dbReference type="PATRIC" id="fig|269796.9.peg.2092"/>
<dbReference type="eggNOG" id="COG0422">
    <property type="taxonomic scope" value="Bacteria"/>
</dbReference>
<dbReference type="HOGENOM" id="CLU_013181_2_1_5"/>
<dbReference type="PhylomeDB" id="Q2RST7"/>
<dbReference type="UniPathway" id="UPA00060"/>
<dbReference type="Proteomes" id="UP000001929">
    <property type="component" value="Chromosome"/>
</dbReference>
<dbReference type="GO" id="GO:0005829">
    <property type="term" value="C:cytosol"/>
    <property type="evidence" value="ECO:0007669"/>
    <property type="project" value="TreeGrafter"/>
</dbReference>
<dbReference type="GO" id="GO:0051539">
    <property type="term" value="F:4 iron, 4 sulfur cluster binding"/>
    <property type="evidence" value="ECO:0007669"/>
    <property type="project" value="UniProtKB-KW"/>
</dbReference>
<dbReference type="GO" id="GO:0016830">
    <property type="term" value="F:carbon-carbon lyase activity"/>
    <property type="evidence" value="ECO:0007669"/>
    <property type="project" value="InterPro"/>
</dbReference>
<dbReference type="GO" id="GO:0008270">
    <property type="term" value="F:zinc ion binding"/>
    <property type="evidence" value="ECO:0007669"/>
    <property type="project" value="UniProtKB-UniRule"/>
</dbReference>
<dbReference type="GO" id="GO:0009228">
    <property type="term" value="P:thiamine biosynthetic process"/>
    <property type="evidence" value="ECO:0007669"/>
    <property type="project" value="UniProtKB-KW"/>
</dbReference>
<dbReference type="GO" id="GO:0009229">
    <property type="term" value="P:thiamine diphosphate biosynthetic process"/>
    <property type="evidence" value="ECO:0007669"/>
    <property type="project" value="UniProtKB-UniRule"/>
</dbReference>
<dbReference type="FunFam" id="3.20.20.540:FF:000001">
    <property type="entry name" value="Phosphomethylpyrimidine synthase"/>
    <property type="match status" value="1"/>
</dbReference>
<dbReference type="Gene3D" id="6.10.250.620">
    <property type="match status" value="1"/>
</dbReference>
<dbReference type="Gene3D" id="3.20.20.540">
    <property type="entry name" value="Radical SAM ThiC family, central domain"/>
    <property type="match status" value="1"/>
</dbReference>
<dbReference type="HAMAP" id="MF_00089">
    <property type="entry name" value="ThiC"/>
    <property type="match status" value="1"/>
</dbReference>
<dbReference type="InterPro" id="IPR037509">
    <property type="entry name" value="ThiC"/>
</dbReference>
<dbReference type="InterPro" id="IPR025747">
    <property type="entry name" value="ThiC-associated_dom"/>
</dbReference>
<dbReference type="InterPro" id="IPR038521">
    <property type="entry name" value="ThiC/Bza_core_dom"/>
</dbReference>
<dbReference type="InterPro" id="IPR002817">
    <property type="entry name" value="ThiC/BzaA/B"/>
</dbReference>
<dbReference type="NCBIfam" id="NF006763">
    <property type="entry name" value="PRK09284.1"/>
    <property type="match status" value="1"/>
</dbReference>
<dbReference type="NCBIfam" id="NF009895">
    <property type="entry name" value="PRK13352.1"/>
    <property type="match status" value="1"/>
</dbReference>
<dbReference type="NCBIfam" id="TIGR00190">
    <property type="entry name" value="thiC"/>
    <property type="match status" value="1"/>
</dbReference>
<dbReference type="PANTHER" id="PTHR30557:SF1">
    <property type="entry name" value="PHOSPHOMETHYLPYRIMIDINE SYNTHASE, CHLOROPLASTIC"/>
    <property type="match status" value="1"/>
</dbReference>
<dbReference type="PANTHER" id="PTHR30557">
    <property type="entry name" value="THIAMINE BIOSYNTHESIS PROTEIN THIC"/>
    <property type="match status" value="1"/>
</dbReference>
<dbReference type="Pfam" id="PF13667">
    <property type="entry name" value="ThiC-associated"/>
    <property type="match status" value="1"/>
</dbReference>
<dbReference type="Pfam" id="PF01964">
    <property type="entry name" value="ThiC_Rad_SAM"/>
    <property type="match status" value="1"/>
</dbReference>
<dbReference type="SFLD" id="SFLDF00407">
    <property type="entry name" value="phosphomethylpyrimidine_syntha"/>
    <property type="match status" value="1"/>
</dbReference>
<dbReference type="SFLD" id="SFLDG01114">
    <property type="entry name" value="phosphomethylpyrimidine_syntha"/>
    <property type="match status" value="1"/>
</dbReference>
<dbReference type="SFLD" id="SFLDS00113">
    <property type="entry name" value="Radical_SAM_Phosphomethylpyrim"/>
    <property type="match status" value="1"/>
</dbReference>
<accession>Q2RST7</accession>
<protein>
    <recommendedName>
        <fullName evidence="1">Phosphomethylpyrimidine synthase</fullName>
        <ecNumber evidence="1">4.1.99.17</ecNumber>
    </recommendedName>
    <alternativeName>
        <fullName evidence="1">Hydroxymethylpyrimidine phosphate synthase</fullName>
        <shortName evidence="1">HMP-P synthase</shortName>
        <shortName evidence="1">HMP-phosphate synthase</shortName>
        <shortName evidence="1">HMPP synthase</shortName>
    </alternativeName>
    <alternativeName>
        <fullName evidence="1">Thiamine biosynthesis protein ThiC</fullName>
    </alternativeName>
</protein>
<gene>
    <name evidence="1" type="primary">thiC</name>
    <name type="ordered locus">Rru_A2008</name>
</gene>
<name>THIC_RHORT</name>
<reference key="1">
    <citation type="journal article" date="2011" name="Stand. Genomic Sci.">
        <title>Complete genome sequence of Rhodospirillum rubrum type strain (S1).</title>
        <authorList>
            <person name="Munk A.C."/>
            <person name="Copeland A."/>
            <person name="Lucas S."/>
            <person name="Lapidus A."/>
            <person name="Del Rio T.G."/>
            <person name="Barry K."/>
            <person name="Detter J.C."/>
            <person name="Hammon N."/>
            <person name="Israni S."/>
            <person name="Pitluck S."/>
            <person name="Brettin T."/>
            <person name="Bruce D."/>
            <person name="Han C."/>
            <person name="Tapia R."/>
            <person name="Gilna P."/>
            <person name="Schmutz J."/>
            <person name="Larimer F."/>
            <person name="Land M."/>
            <person name="Kyrpides N.C."/>
            <person name="Mavromatis K."/>
            <person name="Richardson P."/>
            <person name="Rohde M."/>
            <person name="Goeker M."/>
            <person name="Klenk H.P."/>
            <person name="Zhang Y."/>
            <person name="Roberts G.P."/>
            <person name="Reslewic S."/>
            <person name="Schwartz D.C."/>
        </authorList>
    </citation>
    <scope>NUCLEOTIDE SEQUENCE [LARGE SCALE GENOMIC DNA]</scope>
    <source>
        <strain>ATCC 11170 / ATH 1.1.1 / DSM 467 / LMG 4362 / NCIMB 8255 / S1</strain>
    </source>
</reference>
<organism>
    <name type="scientific">Rhodospirillum rubrum (strain ATCC 11170 / ATH 1.1.1 / DSM 467 / LMG 4362 / NCIMB 8255 / S1)</name>
    <dbReference type="NCBI Taxonomy" id="269796"/>
    <lineage>
        <taxon>Bacteria</taxon>
        <taxon>Pseudomonadati</taxon>
        <taxon>Pseudomonadota</taxon>
        <taxon>Alphaproteobacteria</taxon>
        <taxon>Rhodospirillales</taxon>
        <taxon>Rhodospirillaceae</taxon>
        <taxon>Rhodospirillum</taxon>
    </lineage>
</organism>
<proteinExistence type="inferred from homology"/>
<keyword id="KW-0004">4Fe-4S</keyword>
<keyword id="KW-0408">Iron</keyword>
<keyword id="KW-0411">Iron-sulfur</keyword>
<keyword id="KW-0456">Lyase</keyword>
<keyword id="KW-0479">Metal-binding</keyword>
<keyword id="KW-1185">Reference proteome</keyword>
<keyword id="KW-0949">S-adenosyl-L-methionine</keyword>
<keyword id="KW-0784">Thiamine biosynthesis</keyword>
<keyword id="KW-0862">Zinc</keyword>
<evidence type="ECO:0000255" key="1">
    <source>
        <dbReference type="HAMAP-Rule" id="MF_00089"/>
    </source>
</evidence>
<evidence type="ECO:0000256" key="2">
    <source>
        <dbReference type="SAM" id="MobiDB-lite"/>
    </source>
</evidence>
<comment type="function">
    <text evidence="1">Catalyzes the synthesis of the hydroxymethylpyrimidine phosphate (HMP-P) moiety of thiamine from aminoimidazole ribotide (AIR) in a radical S-adenosyl-L-methionine (SAM)-dependent reaction.</text>
</comment>
<comment type="catalytic activity">
    <reaction evidence="1">
        <text>5-amino-1-(5-phospho-beta-D-ribosyl)imidazole + S-adenosyl-L-methionine = 4-amino-2-methyl-5-(phosphooxymethyl)pyrimidine + CO + 5'-deoxyadenosine + formate + L-methionine + 3 H(+)</text>
        <dbReference type="Rhea" id="RHEA:24840"/>
        <dbReference type="ChEBI" id="CHEBI:15378"/>
        <dbReference type="ChEBI" id="CHEBI:15740"/>
        <dbReference type="ChEBI" id="CHEBI:17245"/>
        <dbReference type="ChEBI" id="CHEBI:17319"/>
        <dbReference type="ChEBI" id="CHEBI:57844"/>
        <dbReference type="ChEBI" id="CHEBI:58354"/>
        <dbReference type="ChEBI" id="CHEBI:59789"/>
        <dbReference type="ChEBI" id="CHEBI:137981"/>
        <dbReference type="EC" id="4.1.99.17"/>
    </reaction>
</comment>
<comment type="cofactor">
    <cofactor evidence="1">
        <name>[4Fe-4S] cluster</name>
        <dbReference type="ChEBI" id="CHEBI:49883"/>
    </cofactor>
    <text evidence="1">Binds 1 [4Fe-4S] cluster per subunit. The cluster is coordinated with 3 cysteines and an exchangeable S-adenosyl-L-methionine.</text>
</comment>
<comment type="pathway">
    <text evidence="1">Cofactor biosynthesis; thiamine diphosphate biosynthesis.</text>
</comment>
<comment type="subunit">
    <text evidence="1">Homodimer.</text>
</comment>
<comment type="similarity">
    <text evidence="1">Belongs to the ThiC family.</text>
</comment>
<sequence length="621" mass="66602">MTAPFLSSLSPTSPLASATAPFPGSRKVYARPADAPHLRVPFREIILSDPGEAPVRVADPSGPYSDPEATIDLRQGLARHRASWASARGNSTVTAGRPAPSEGDFEAFPLTYAPLRRRDETPFTQLEYARAGVITDEMIYVATRENLGRDSAVAGACARLAGGEAFGAALPAHVTPEFVRAEIAAGRAIIPANINHPELEPTIIGRNFLVKVNANIGNSALGSSIEDEVAKLVWAIRWGADTVMDLSTGKAIHATREWILRNSPVPIGTVPLYQALEKVGGDATRLDWAVFEDTLIEQCEQGVDYFTIHAGVRLAHIPLTASRTTGIVSRGGSILAKWCLSHHRENFLYERFADICAILRRYDVAFSLGDGLRPGSVADANDAAQFAELDTLGALTAVAWEHGCQVMVEGPGHVPMHKIKANMDRQLATCGEAPFYTLGPLTTDIAPGHDHITSAIGAAMIGWFGTAMLCYVTPKEHLGLPDRADVKAGVIAYKLAAHAADIAKGHPAAQLRDDAISRARFDFRWSDQFNLGLDPEGARAFHDETLPHAAHKTAHFCSMCGPKFCSMKISHDIRDGALEGADALTQAGLDQMSATFRASGGEVHLDAQALDALAWEGKPAR</sequence>
<feature type="chain" id="PRO_0000242298" description="Phosphomethylpyrimidine synthase">
    <location>
        <begin position="1"/>
        <end position="621"/>
    </location>
</feature>
<feature type="region of interest" description="Disordered" evidence="2">
    <location>
        <begin position="1"/>
        <end position="29"/>
    </location>
</feature>
<feature type="compositionally biased region" description="Low complexity" evidence="2">
    <location>
        <begin position="1"/>
        <end position="23"/>
    </location>
</feature>
<feature type="binding site" evidence="1">
    <location>
        <position position="215"/>
    </location>
    <ligand>
        <name>substrate</name>
    </ligand>
</feature>
<feature type="binding site" evidence="1">
    <location>
        <position position="244"/>
    </location>
    <ligand>
        <name>substrate</name>
    </ligand>
</feature>
<feature type="binding site" evidence="1">
    <location>
        <position position="273"/>
    </location>
    <ligand>
        <name>substrate</name>
    </ligand>
</feature>
<feature type="binding site" evidence="1">
    <location>
        <position position="309"/>
    </location>
    <ligand>
        <name>substrate</name>
    </ligand>
</feature>
<feature type="binding site" evidence="1">
    <location>
        <begin position="329"/>
        <end position="331"/>
    </location>
    <ligand>
        <name>substrate</name>
    </ligand>
</feature>
<feature type="binding site" evidence="1">
    <location>
        <begin position="370"/>
        <end position="373"/>
    </location>
    <ligand>
        <name>substrate</name>
    </ligand>
</feature>
<feature type="binding site" evidence="1">
    <location>
        <position position="409"/>
    </location>
    <ligand>
        <name>substrate</name>
    </ligand>
</feature>
<feature type="binding site" evidence="1">
    <location>
        <position position="413"/>
    </location>
    <ligand>
        <name>Zn(2+)</name>
        <dbReference type="ChEBI" id="CHEBI:29105"/>
    </ligand>
</feature>
<feature type="binding site" evidence="1">
    <location>
        <position position="436"/>
    </location>
    <ligand>
        <name>substrate</name>
    </ligand>
</feature>
<feature type="binding site" evidence="1">
    <location>
        <position position="477"/>
    </location>
    <ligand>
        <name>Zn(2+)</name>
        <dbReference type="ChEBI" id="CHEBI:29105"/>
    </ligand>
</feature>
<feature type="binding site" evidence="1">
    <location>
        <position position="557"/>
    </location>
    <ligand>
        <name>[4Fe-4S] cluster</name>
        <dbReference type="ChEBI" id="CHEBI:49883"/>
        <note>4Fe-4S-S-AdoMet</note>
    </ligand>
</feature>
<feature type="binding site" evidence="1">
    <location>
        <position position="560"/>
    </location>
    <ligand>
        <name>[4Fe-4S] cluster</name>
        <dbReference type="ChEBI" id="CHEBI:49883"/>
        <note>4Fe-4S-S-AdoMet</note>
    </ligand>
</feature>
<feature type="binding site" evidence="1">
    <location>
        <position position="565"/>
    </location>
    <ligand>
        <name>[4Fe-4S] cluster</name>
        <dbReference type="ChEBI" id="CHEBI:49883"/>
        <note>4Fe-4S-S-AdoMet</note>
    </ligand>
</feature>